<gene>
    <name evidence="1" type="primary">pheS</name>
    <name type="ordered locus">c2112</name>
</gene>
<protein>
    <recommendedName>
        <fullName evidence="1">Phenylalanine--tRNA ligase alpha subunit</fullName>
        <ecNumber evidence="1">6.1.1.20</ecNumber>
    </recommendedName>
    <alternativeName>
        <fullName evidence="1">Phenylalanyl-tRNA synthetase alpha subunit</fullName>
        <shortName evidence="1">PheRS</shortName>
    </alternativeName>
</protein>
<proteinExistence type="inferred from homology"/>
<reference key="1">
    <citation type="journal article" date="2002" name="Proc. Natl. Acad. Sci. U.S.A.">
        <title>Extensive mosaic structure revealed by the complete genome sequence of uropathogenic Escherichia coli.</title>
        <authorList>
            <person name="Welch R.A."/>
            <person name="Burland V."/>
            <person name="Plunkett G. III"/>
            <person name="Redford P."/>
            <person name="Roesch P."/>
            <person name="Rasko D."/>
            <person name="Buckles E.L."/>
            <person name="Liou S.-R."/>
            <person name="Boutin A."/>
            <person name="Hackett J."/>
            <person name="Stroud D."/>
            <person name="Mayhew G.F."/>
            <person name="Rose D.J."/>
            <person name="Zhou S."/>
            <person name="Schwartz D.C."/>
            <person name="Perna N.T."/>
            <person name="Mobley H.L.T."/>
            <person name="Donnenberg M.S."/>
            <person name="Blattner F.R."/>
        </authorList>
    </citation>
    <scope>NUCLEOTIDE SEQUENCE [LARGE SCALE GENOMIC DNA]</scope>
    <source>
        <strain>CFT073 / ATCC 700928 / UPEC</strain>
    </source>
</reference>
<sequence>MSHLAELVASAKAAISQASDVAALDNVRVEYLGKKGHLTLQMTTLRELPPEERPAAGAVINEAKEQVQQALNARKAELESAALNARLAAETIDVSLPGRRIENGGLHPVTRTIDRIESFFGELGFTVATGPEIEDDYHNFDALNIPGHHPARADHDTFWFDATRLLRTQTSGVQIRTMKAQQPPIRIIAPGRVYRNDYDQTHTPMFHQMEGLIVDTNISFTNLKGTLHDFLRNFFEEDLQIRFRPSYFPFTEPSAEVDVMGKNGKWLEVLGCGMVHPNVLRNVGIDPEVYSGFAFGMGMERLTMLRYGVTDLRSFFENDLRFLKQFK</sequence>
<evidence type="ECO:0000255" key="1">
    <source>
        <dbReference type="HAMAP-Rule" id="MF_00281"/>
    </source>
</evidence>
<evidence type="ECO:0000305" key="2"/>
<keyword id="KW-0030">Aminoacyl-tRNA synthetase</keyword>
<keyword id="KW-0067">ATP-binding</keyword>
<keyword id="KW-0963">Cytoplasm</keyword>
<keyword id="KW-0436">Ligase</keyword>
<keyword id="KW-0460">Magnesium</keyword>
<keyword id="KW-0479">Metal-binding</keyword>
<keyword id="KW-0547">Nucleotide-binding</keyword>
<keyword id="KW-0648">Protein biosynthesis</keyword>
<keyword id="KW-1185">Reference proteome</keyword>
<accession>P67036</accession>
<accession>Q8XE31</accession>
<feature type="chain" id="PRO_0000126702" description="Phenylalanine--tRNA ligase alpha subunit">
    <location>
        <begin position="1"/>
        <end position="327"/>
    </location>
</feature>
<feature type="binding site" evidence="1">
    <location>
        <position position="252"/>
    </location>
    <ligand>
        <name>Mg(2+)</name>
        <dbReference type="ChEBI" id="CHEBI:18420"/>
        <note>shared with beta subunit</note>
    </ligand>
</feature>
<dbReference type="EC" id="6.1.1.20" evidence="1"/>
<dbReference type="EMBL" id="AE014075">
    <property type="protein sequence ID" value="AAN80570.1"/>
    <property type="status" value="ALT_INIT"/>
    <property type="molecule type" value="Genomic_DNA"/>
</dbReference>
<dbReference type="RefSeq" id="WP_000018588.1">
    <property type="nucleotide sequence ID" value="NZ_CP051263.1"/>
</dbReference>
<dbReference type="SMR" id="P67036"/>
<dbReference type="STRING" id="199310.c2112"/>
<dbReference type="GeneID" id="86946239"/>
<dbReference type="KEGG" id="ecc:c2112"/>
<dbReference type="eggNOG" id="COG0016">
    <property type="taxonomic scope" value="Bacteria"/>
</dbReference>
<dbReference type="HOGENOM" id="CLU_025086_0_1_6"/>
<dbReference type="Proteomes" id="UP000001410">
    <property type="component" value="Chromosome"/>
</dbReference>
<dbReference type="GO" id="GO:0005737">
    <property type="term" value="C:cytoplasm"/>
    <property type="evidence" value="ECO:0007669"/>
    <property type="project" value="UniProtKB-SubCell"/>
</dbReference>
<dbReference type="GO" id="GO:0005524">
    <property type="term" value="F:ATP binding"/>
    <property type="evidence" value="ECO:0007669"/>
    <property type="project" value="UniProtKB-UniRule"/>
</dbReference>
<dbReference type="GO" id="GO:0000287">
    <property type="term" value="F:magnesium ion binding"/>
    <property type="evidence" value="ECO:0007669"/>
    <property type="project" value="UniProtKB-UniRule"/>
</dbReference>
<dbReference type="GO" id="GO:0004826">
    <property type="term" value="F:phenylalanine-tRNA ligase activity"/>
    <property type="evidence" value="ECO:0007669"/>
    <property type="project" value="UniProtKB-UniRule"/>
</dbReference>
<dbReference type="GO" id="GO:0000049">
    <property type="term" value="F:tRNA binding"/>
    <property type="evidence" value="ECO:0007669"/>
    <property type="project" value="InterPro"/>
</dbReference>
<dbReference type="GO" id="GO:0006432">
    <property type="term" value="P:phenylalanyl-tRNA aminoacylation"/>
    <property type="evidence" value="ECO:0007669"/>
    <property type="project" value="UniProtKB-UniRule"/>
</dbReference>
<dbReference type="CDD" id="cd00496">
    <property type="entry name" value="PheRS_alpha_core"/>
    <property type="match status" value="1"/>
</dbReference>
<dbReference type="FunFam" id="3.30.930.10:FF:000003">
    <property type="entry name" value="Phenylalanine--tRNA ligase alpha subunit"/>
    <property type="match status" value="1"/>
</dbReference>
<dbReference type="Gene3D" id="3.30.930.10">
    <property type="entry name" value="Bira Bifunctional Protein, Domain 2"/>
    <property type="match status" value="1"/>
</dbReference>
<dbReference type="HAMAP" id="MF_00281">
    <property type="entry name" value="Phe_tRNA_synth_alpha1"/>
    <property type="match status" value="1"/>
</dbReference>
<dbReference type="InterPro" id="IPR006195">
    <property type="entry name" value="aa-tRNA-synth_II"/>
</dbReference>
<dbReference type="InterPro" id="IPR045864">
    <property type="entry name" value="aa-tRNA-synth_II/BPL/LPL"/>
</dbReference>
<dbReference type="InterPro" id="IPR004529">
    <property type="entry name" value="Phe-tRNA-synth_IIc_asu"/>
</dbReference>
<dbReference type="InterPro" id="IPR004188">
    <property type="entry name" value="Phe-tRNA_ligase_II_N"/>
</dbReference>
<dbReference type="InterPro" id="IPR022911">
    <property type="entry name" value="Phe_tRNA_ligase_alpha1_bac"/>
</dbReference>
<dbReference type="InterPro" id="IPR002319">
    <property type="entry name" value="Phenylalanyl-tRNA_Synthase"/>
</dbReference>
<dbReference type="InterPro" id="IPR010978">
    <property type="entry name" value="tRNA-bd_arm"/>
</dbReference>
<dbReference type="NCBIfam" id="TIGR00468">
    <property type="entry name" value="pheS"/>
    <property type="match status" value="1"/>
</dbReference>
<dbReference type="PANTHER" id="PTHR11538:SF41">
    <property type="entry name" value="PHENYLALANINE--TRNA LIGASE, MITOCHONDRIAL"/>
    <property type="match status" value="1"/>
</dbReference>
<dbReference type="PANTHER" id="PTHR11538">
    <property type="entry name" value="PHENYLALANYL-TRNA SYNTHETASE"/>
    <property type="match status" value="1"/>
</dbReference>
<dbReference type="Pfam" id="PF02912">
    <property type="entry name" value="Phe_tRNA-synt_N"/>
    <property type="match status" value="1"/>
</dbReference>
<dbReference type="Pfam" id="PF01409">
    <property type="entry name" value="tRNA-synt_2d"/>
    <property type="match status" value="1"/>
</dbReference>
<dbReference type="SUPFAM" id="SSF55681">
    <property type="entry name" value="Class II aaRS and biotin synthetases"/>
    <property type="match status" value="1"/>
</dbReference>
<dbReference type="SUPFAM" id="SSF46589">
    <property type="entry name" value="tRNA-binding arm"/>
    <property type="match status" value="1"/>
</dbReference>
<dbReference type="PROSITE" id="PS50862">
    <property type="entry name" value="AA_TRNA_LIGASE_II"/>
    <property type="match status" value="1"/>
</dbReference>
<organism>
    <name type="scientific">Escherichia coli O6:H1 (strain CFT073 / ATCC 700928 / UPEC)</name>
    <dbReference type="NCBI Taxonomy" id="199310"/>
    <lineage>
        <taxon>Bacteria</taxon>
        <taxon>Pseudomonadati</taxon>
        <taxon>Pseudomonadota</taxon>
        <taxon>Gammaproteobacteria</taxon>
        <taxon>Enterobacterales</taxon>
        <taxon>Enterobacteriaceae</taxon>
        <taxon>Escherichia</taxon>
    </lineage>
</organism>
<comment type="catalytic activity">
    <reaction evidence="1">
        <text>tRNA(Phe) + L-phenylalanine + ATP = L-phenylalanyl-tRNA(Phe) + AMP + diphosphate + H(+)</text>
        <dbReference type="Rhea" id="RHEA:19413"/>
        <dbReference type="Rhea" id="RHEA-COMP:9668"/>
        <dbReference type="Rhea" id="RHEA-COMP:9699"/>
        <dbReference type="ChEBI" id="CHEBI:15378"/>
        <dbReference type="ChEBI" id="CHEBI:30616"/>
        <dbReference type="ChEBI" id="CHEBI:33019"/>
        <dbReference type="ChEBI" id="CHEBI:58095"/>
        <dbReference type="ChEBI" id="CHEBI:78442"/>
        <dbReference type="ChEBI" id="CHEBI:78531"/>
        <dbReference type="ChEBI" id="CHEBI:456215"/>
        <dbReference type="EC" id="6.1.1.20"/>
    </reaction>
</comment>
<comment type="cofactor">
    <cofactor evidence="1">
        <name>Mg(2+)</name>
        <dbReference type="ChEBI" id="CHEBI:18420"/>
    </cofactor>
    <text evidence="1">Binds 2 magnesium ions per tetramer.</text>
</comment>
<comment type="subunit">
    <text evidence="1">Tetramer of two alpha and two beta subunits.</text>
</comment>
<comment type="subcellular location">
    <subcellularLocation>
        <location evidence="1">Cytoplasm</location>
    </subcellularLocation>
</comment>
<comment type="similarity">
    <text evidence="1">Belongs to the class-II aminoacyl-tRNA synthetase family. Phe-tRNA synthetase alpha subunit type 1 subfamily.</text>
</comment>
<comment type="sequence caution" evidence="2">
    <conflict type="erroneous initiation">
        <sequence resource="EMBL-CDS" id="AAN80570"/>
    </conflict>
</comment>
<name>SYFA_ECOL6</name>